<comment type="subcellular location">
    <subcellularLocation>
        <location evidence="3">Cell membrane</location>
        <topology evidence="3">Multi-pass membrane protein</topology>
    </subcellularLocation>
</comment>
<comment type="similarity">
    <text evidence="3">To M.tuberculosis Rv0007.</text>
</comment>
<evidence type="ECO:0000255" key="1"/>
<evidence type="ECO:0000256" key="2">
    <source>
        <dbReference type="SAM" id="MobiDB-lite"/>
    </source>
</evidence>
<evidence type="ECO:0000305" key="3"/>
<protein>
    <recommendedName>
        <fullName>Uncharacterized protein ML0007</fullName>
    </recommendedName>
</protein>
<sequence>MTSPNESRAFNAADDLIGDGSVERAGLHRATSVPGESSEGLQRGHSPEPNDSPPWQRGSARASQSGYRPSDPLTTTRQSNPAPGANVRSNRFISGMTAPALSGQLPKKNNSTQALEPVLMSNEVPFTESYASELPDLSGPVQRTVPCKPSPDRGSSTPRMGRLEITKVRGTGEIRSQISRRSHGPVRASMQIRRIDPWSMLKVSLLLSVALFFVWMIAVAFLYLLLGGMGVWAKLNSNVGDLLNNTGGNSGELVSNSTIFGCAVLVGLVNIVLMTTMAAIAAFVYNLSSDLVGGVEVTLADLD</sequence>
<reference key="1">
    <citation type="submission" date="1996-04" db="EMBL/GenBank/DDBJ databases">
        <authorList>
            <person name="Fsihi H."/>
            <person name="Salazar L."/>
            <person name="Takiff H.E."/>
            <person name="Cole S.T."/>
        </authorList>
    </citation>
    <scope>NUCLEOTIDE SEQUENCE [GENOMIC DNA]</scope>
</reference>
<reference key="2">
    <citation type="journal article" date="2001" name="Nature">
        <title>Massive gene decay in the leprosy bacillus.</title>
        <authorList>
            <person name="Cole S.T."/>
            <person name="Eiglmeier K."/>
            <person name="Parkhill J."/>
            <person name="James K.D."/>
            <person name="Thomson N.R."/>
            <person name="Wheeler P.R."/>
            <person name="Honore N."/>
            <person name="Garnier T."/>
            <person name="Churcher C.M."/>
            <person name="Harris D.E."/>
            <person name="Mungall K.L."/>
            <person name="Basham D."/>
            <person name="Brown D."/>
            <person name="Chillingworth T."/>
            <person name="Connor R."/>
            <person name="Davies R.M."/>
            <person name="Devlin K."/>
            <person name="Duthoy S."/>
            <person name="Feltwell T."/>
            <person name="Fraser A."/>
            <person name="Hamlin N."/>
            <person name="Holroyd S."/>
            <person name="Hornsby T."/>
            <person name="Jagels K."/>
            <person name="Lacroix C."/>
            <person name="Maclean J."/>
            <person name="Moule S."/>
            <person name="Murphy L.D."/>
            <person name="Oliver K."/>
            <person name="Quail M.A."/>
            <person name="Rajandream M.A."/>
            <person name="Rutherford K.M."/>
            <person name="Rutter S."/>
            <person name="Seeger K."/>
            <person name="Simon S."/>
            <person name="Simmonds M."/>
            <person name="Skelton J."/>
            <person name="Squares R."/>
            <person name="Squares S."/>
            <person name="Stevens K."/>
            <person name="Taylor K."/>
            <person name="Whitehead S."/>
            <person name="Woodward J.R."/>
            <person name="Barrell B.G."/>
        </authorList>
    </citation>
    <scope>NUCLEOTIDE SEQUENCE [LARGE SCALE GENOMIC DNA]</scope>
    <source>
        <strain>TN</strain>
    </source>
</reference>
<organism>
    <name type="scientific">Mycobacterium leprae (strain TN)</name>
    <dbReference type="NCBI Taxonomy" id="272631"/>
    <lineage>
        <taxon>Bacteria</taxon>
        <taxon>Bacillati</taxon>
        <taxon>Actinomycetota</taxon>
        <taxon>Actinomycetes</taxon>
        <taxon>Mycobacteriales</taxon>
        <taxon>Mycobacteriaceae</taxon>
        <taxon>Mycobacterium</taxon>
    </lineage>
</organism>
<proteinExistence type="predicted"/>
<gene>
    <name type="ordered locus">ML0007</name>
    <name type="ORF">MLB1770.07</name>
</gene>
<keyword id="KW-1003">Cell membrane</keyword>
<keyword id="KW-0472">Membrane</keyword>
<keyword id="KW-1185">Reference proteome</keyword>
<keyword id="KW-0812">Transmembrane</keyword>
<keyword id="KW-1133">Transmembrane helix</keyword>
<feature type="chain" id="PRO_0000103638" description="Uncharacterized protein ML0007">
    <location>
        <begin position="1"/>
        <end position="303"/>
    </location>
</feature>
<feature type="transmembrane region" description="Helical" evidence="1">
    <location>
        <begin position="205"/>
        <end position="225"/>
    </location>
</feature>
<feature type="transmembrane region" description="Helical" evidence="1">
    <location>
        <begin position="264"/>
        <end position="284"/>
    </location>
</feature>
<feature type="region of interest" description="Disordered" evidence="2">
    <location>
        <begin position="1"/>
        <end position="89"/>
    </location>
</feature>
<feature type="region of interest" description="Disordered" evidence="2">
    <location>
        <begin position="132"/>
        <end position="159"/>
    </location>
</feature>
<feature type="compositionally biased region" description="Polar residues" evidence="2">
    <location>
        <begin position="61"/>
        <end position="89"/>
    </location>
</feature>
<accession>O32870</accession>
<name>Y007_MYCLE</name>
<dbReference type="EMBL" id="Z70722">
    <property type="protein sequence ID" value="CAA94717.1"/>
    <property type="molecule type" value="Genomic_DNA"/>
</dbReference>
<dbReference type="EMBL" id="AL583917">
    <property type="protein sequence ID" value="CAC29515.1"/>
    <property type="molecule type" value="Genomic_DNA"/>
</dbReference>
<dbReference type="PIR" id="T10007">
    <property type="entry name" value="T10007"/>
</dbReference>
<dbReference type="RefSeq" id="NP_301135.1">
    <property type="nucleotide sequence ID" value="NC_002677.1"/>
</dbReference>
<dbReference type="RefSeq" id="WP_010907460.1">
    <property type="nucleotide sequence ID" value="NC_002677.1"/>
</dbReference>
<dbReference type="SMR" id="O32870"/>
<dbReference type="STRING" id="272631.gene:17573816"/>
<dbReference type="KEGG" id="mle:ML0007"/>
<dbReference type="PATRIC" id="fig|272631.5.peg.7"/>
<dbReference type="Leproma" id="ML0007"/>
<dbReference type="eggNOG" id="COG3266">
    <property type="taxonomic scope" value="Bacteria"/>
</dbReference>
<dbReference type="HOGENOM" id="CLU_046697_0_1_11"/>
<dbReference type="OrthoDB" id="3240216at2"/>
<dbReference type="Proteomes" id="UP000000806">
    <property type="component" value="Chromosome"/>
</dbReference>
<dbReference type="GO" id="GO:0005886">
    <property type="term" value="C:plasma membrane"/>
    <property type="evidence" value="ECO:0007669"/>
    <property type="project" value="UniProtKB-SubCell"/>
</dbReference>
<dbReference type="InterPro" id="IPR021949">
    <property type="entry name" value="DUF3566_TM"/>
</dbReference>
<dbReference type="Pfam" id="PF12089">
    <property type="entry name" value="DUF3566"/>
    <property type="match status" value="1"/>
</dbReference>